<reference key="1">
    <citation type="journal article" date="2019" name="Toxicon">
        <title>Novel three-finger toxins from Micrurus dumerilii and Micrurus mipartitus coral snake venoms: Phylogenetic relationships and characterization of Clarkitoxin-I-Mdum.</title>
        <authorList>
            <person name="Rey-Suarez P."/>
            <person name="Saldarriaga-Cordoba M."/>
            <person name="Torres U."/>
            <person name="Marin-Villa M."/>
            <person name="Lomonte B."/>
            <person name="Nunez V."/>
        </authorList>
    </citation>
    <scope>NUCLEOTIDE SEQUENCE [MRNA]</scope>
    <scope>TISSUE SPECIFICITY</scope>
    <source>
        <tissue evidence="6">Venom gland</tissue>
    </source>
</reference>
<reference key="2">
    <citation type="journal article" date="2012" name="Toxicon">
        <title>Mipartoxin-I, a novel three-finger toxin, is the major neurotoxic component in the venom of the redtail coral snake Micrurus mipartitus (Elapidae).</title>
        <authorList>
            <person name="Rey-Suarez P."/>
            <person name="Floriano R.S."/>
            <person name="Rostelato-Ferreira S."/>
            <person name="Saldarriaga-Cordoba M."/>
            <person name="Nunez V."/>
            <person name="Rodrigues-Simioni L."/>
            <person name="Lomonte B."/>
        </authorList>
    </citation>
    <scope>PROTEIN SEQUENCE OF 22-81</scope>
    <scope>FUNCTION</scope>
    <scope>BIOASSAY</scope>
    <scope>SUBCELLULAR LOCATION</scope>
    <scope>MASS SPECTROMETRY</scope>
    <scope>DISULFIDE BONDS</scope>
    <scope>TOXIC DOSE</scope>
    <source>
        <tissue>Venom</tissue>
    </source>
</reference>
<proteinExistence type="evidence at protein level"/>
<organism>
    <name type="scientific">Micrurus mipartitus</name>
    <name type="common">Red-tailed coral snake</name>
    <dbReference type="NCBI Taxonomy" id="430902"/>
    <lineage>
        <taxon>Eukaryota</taxon>
        <taxon>Metazoa</taxon>
        <taxon>Chordata</taxon>
        <taxon>Craniata</taxon>
        <taxon>Vertebrata</taxon>
        <taxon>Euteleostomi</taxon>
        <taxon>Lepidosauria</taxon>
        <taxon>Squamata</taxon>
        <taxon>Bifurcata</taxon>
        <taxon>Unidentata</taxon>
        <taxon>Episquamata</taxon>
        <taxon>Toxicofera</taxon>
        <taxon>Serpentes</taxon>
        <taxon>Colubroidea</taxon>
        <taxon>Elapidae</taxon>
        <taxon>Elapinae</taxon>
        <taxon>Micrurus</taxon>
    </lineage>
</organism>
<evidence type="ECO:0000250" key="1">
    <source>
        <dbReference type="UniProtKB" id="P07526"/>
    </source>
</evidence>
<evidence type="ECO:0000255" key="2"/>
<evidence type="ECO:0000269" key="3">
    <source>
    </source>
</evidence>
<evidence type="ECO:0000269" key="4">
    <source>
    </source>
</evidence>
<evidence type="ECO:0000303" key="5">
    <source>
    </source>
</evidence>
<evidence type="ECO:0000303" key="6">
    <source>
    </source>
</evidence>
<evidence type="ECO:0000305" key="7"/>
<protein>
    <recommendedName>
        <fullName evidence="6">Mipartoxin-1</fullName>
    </recommendedName>
    <alternativeName>
        <fullName evidence="5">Mipartoxin-I</fullName>
    </alternativeName>
    <alternativeName>
        <fullName>Three-finger toxin</fullName>
        <shortName>3FTx</shortName>
    </alternativeName>
</protein>
<accession>B3EWF8</accession>
<accession>A0A2P1BSY2</accession>
<keyword id="KW-0008">Acetylcholine receptor inhibiting toxin</keyword>
<keyword id="KW-0903">Direct protein sequencing</keyword>
<keyword id="KW-1015">Disulfide bond</keyword>
<keyword id="KW-0872">Ion channel impairing toxin</keyword>
<keyword id="KW-0528">Neurotoxin</keyword>
<keyword id="KW-0629">Postsynaptic neurotoxin</keyword>
<keyword id="KW-0964">Secreted</keyword>
<keyword id="KW-0732">Signal</keyword>
<keyword id="KW-0800">Toxin</keyword>
<comment type="function">
    <text evidence="3">Snake venom neurotoxin that blocks neuromuscular transmission on both avian and mouse nerve-muscle preparations, presenting a postsynaptic action through the nicotinic acetylcholine receptor (nAChR). Reversibly inhibits twitches in mouse phrenic nerve diaphragm and irreversibly in chick biventer cervicis muscle. Has no cytotoxic activity towards C2C12 cells up to 180 ug/ml.</text>
</comment>
<comment type="subcellular location">
    <subcellularLocation>
        <location evidence="3">Secreted</location>
    </subcellularLocation>
</comment>
<comment type="tissue specificity">
    <text evidence="4">Expressed by the venom gland.</text>
</comment>
<comment type="PTM">
    <text evidence="3">Contains 4 disulfide bonds.</text>
</comment>
<comment type="mass spectrometry"/>
<comment type="mass spectrometry"/>
<comment type="toxic dose">
    <text evidence="3">LD(50) is 0.06 mg/kg by intraperitoneal injection into mice.</text>
</comment>
<comment type="similarity">
    <text evidence="7">Belongs to the three-finger toxin family. Short-chain subfamily.</text>
</comment>
<feature type="signal peptide" evidence="2">
    <location>
        <begin position="1"/>
        <end position="21"/>
    </location>
</feature>
<feature type="chain" id="PRO_0000418720" description="Mipartoxin-1" evidence="3">
    <location>
        <begin position="22"/>
        <end position="81"/>
    </location>
</feature>
<feature type="disulfide bond" evidence="1">
    <location>
        <begin position="24"/>
        <end position="42"/>
    </location>
</feature>
<feature type="disulfide bond" evidence="1">
    <location>
        <begin position="35"/>
        <end position="61"/>
    </location>
</feature>
<feature type="disulfide bond" evidence="1">
    <location>
        <begin position="65"/>
        <end position="73"/>
    </location>
</feature>
<feature type="disulfide bond" evidence="1">
    <location>
        <begin position="74"/>
        <end position="79"/>
    </location>
</feature>
<dbReference type="EMBL" id="KY635900">
    <property type="protein sequence ID" value="AVI57319.1"/>
    <property type="molecule type" value="mRNA"/>
</dbReference>
<dbReference type="SMR" id="B3EWF8"/>
<dbReference type="GO" id="GO:0005615">
    <property type="term" value="C:extracellular space"/>
    <property type="evidence" value="ECO:0000314"/>
    <property type="project" value="UniProtKB"/>
</dbReference>
<dbReference type="GO" id="GO:0030550">
    <property type="term" value="F:acetylcholine receptor inhibitor activity"/>
    <property type="evidence" value="ECO:0000314"/>
    <property type="project" value="UniProtKB"/>
</dbReference>
<dbReference type="GO" id="GO:0099106">
    <property type="term" value="F:ion channel regulator activity"/>
    <property type="evidence" value="ECO:0007669"/>
    <property type="project" value="UniProtKB-KW"/>
</dbReference>
<dbReference type="GO" id="GO:0090729">
    <property type="term" value="F:toxin activity"/>
    <property type="evidence" value="ECO:0000314"/>
    <property type="project" value="UniProtKB"/>
</dbReference>
<dbReference type="GO" id="GO:0044513">
    <property type="term" value="P:venom-mediated perturbation of G protein-coupled receptor signaling in another organism"/>
    <property type="evidence" value="ECO:0000314"/>
    <property type="project" value="UniProtKB"/>
</dbReference>
<dbReference type="GO" id="GO:0044487">
    <property type="term" value="P:venom-mediated perturbation of transmission of nerve impulse in another organism"/>
    <property type="evidence" value="ECO:0000314"/>
    <property type="project" value="UniProtKB"/>
</dbReference>
<dbReference type="Gene3D" id="2.10.60.10">
    <property type="entry name" value="CD59"/>
    <property type="match status" value="1"/>
</dbReference>
<dbReference type="InterPro" id="IPR045860">
    <property type="entry name" value="Snake_toxin-like_sf"/>
</dbReference>
<dbReference type="SUPFAM" id="SSF57302">
    <property type="entry name" value="Snake toxin-like"/>
    <property type="match status" value="1"/>
</dbReference>
<sequence>MKTLLLTLVVVTIVCLDLGNSLKCYVSREGKTQTCPEGEKLCEKYAVSYFHDGRWRYRYECTSACHRGPYNVCCSTDLCNK</sequence>
<name>3SX1_MICMP</name>